<proteinExistence type="evidence at protein level"/>
<sequence>MKDAERIPGPKPLPVVGNLFDIDPEHSLESIVAFAEKFGPLFQITINGEKQIFATSQALVDELCDELRFHKAVVTGLEILRLLAHDGLFTAYHGERGWGIAHRILVPAFGPLRIRNMLDDMSDVAQQLCLKWARQGGSTSINITEDFTRLTLDTIALCTMGFRLNSFYNNETMHPFVQSMLYVLREADIQANLPGIANSIRVSAQRRMHKNIEAMRTMARGIIQERRKNKNPVDDILNTLLNGRDPVTGEGMSDDSIIDNVITFLIAGHETTSGLLSFTFYFLIQHPHILKKAQEEVDETVGLAQISAQHLAELPYIDAILKESLRLMPTAPGFTVTPKKTEVLGGRWMINAGQPVNVLLPACLRDQSVFGPDADEFRPERMLAENFSKLPPNSWKPFGNGERGCIGRAFAWQEAQLVVAMILQTFDLVPDDPSYQLRIKETLTIKPDGFRIRATLRRGQTATGLSRRSMLVARDGSSEESSNHPAEARGDHAPARGQPVSFFYGSNSGTCKALAHQLASNMMSRGYTTQKLAPLDNAVDNLPRDQPVIILTTTYDGQPTDNAKKFVAWLETGNVLSLQGISYAVFGCGHHDWTQTFYRIPILIDDLMYKAGATRLAPRGAANAAVSDLFSDLEAWEETSLLPALRENFLPSNSTDFDPLNPHQIQLSLSKPRRVDLHKGLIEAKVTAVRVLTSPDTPEKRHLEFCFQGDLSLRPGDHLNILPVNPPSTVSRVLAQFNLAPDYNITVNSFNTLGLPQATPVSASELFSSYVELCQPATRNNLKSLIAATQSDTVKQELNRLYDSYEFIVRDKRVSVLDLLEQFPSISLPIAAFISMLPALRVRTYSLSMAPAFKPSHSSLTFSVINEPAWRGSGQHLGVASNYLASLTSGSIFYFSPRPAKETFHLPKDPSRTPIIMICAGSGLAPFLSFIQDRMVLKQQNKPLAKAFLFFGCRGRSLDDLYHEELSEYEAAGVVEVRRAYSKTPEFDIAKGCRYVQHRLVTEGQAILSLWAQNAIIYVCGSTSMAKGAEAVLQNMLGPLPKERYVTEIF</sequence>
<accession>G7XMT1</accession>
<name>CYPE5_ASPKW</name>
<feature type="chain" id="PRO_0000459037" description="Self-sufficient cytochrome P450 monooxygenase CYP505E5">
    <location>
        <begin position="1"/>
        <end position="1050"/>
    </location>
</feature>
<feature type="domain" description="Flavodoxin-like" evidence="3">
    <location>
        <begin position="500"/>
        <end position="641"/>
    </location>
</feature>
<feature type="domain" description="FAD-binding FR-type" evidence="4">
    <location>
        <begin position="679"/>
        <end position="907"/>
    </location>
</feature>
<feature type="region of interest" description="Disordered" evidence="5">
    <location>
        <begin position="461"/>
        <end position="495"/>
    </location>
</feature>
<feature type="binding site" description="axial binding residue" evidence="1">
    <location>
        <position position="405"/>
    </location>
    <ligand>
        <name>heme</name>
        <dbReference type="ChEBI" id="CHEBI:30413"/>
    </ligand>
    <ligandPart>
        <name>Fe</name>
        <dbReference type="ChEBI" id="CHEBI:18248"/>
    </ligandPart>
</feature>
<feature type="binding site" evidence="3">
    <location>
        <begin position="506"/>
        <end position="510"/>
    </location>
    <ligand>
        <name>FMN</name>
        <dbReference type="ChEBI" id="CHEBI:58210"/>
    </ligand>
</feature>
<feature type="binding site" evidence="3">
    <location>
        <begin position="585"/>
        <end position="617"/>
    </location>
    <ligand>
        <name>FMN</name>
        <dbReference type="ChEBI" id="CHEBI:58210"/>
    </ligand>
</feature>
<protein>
    <recommendedName>
        <fullName evidence="7">Self-sufficient cytochrome P450 monooxygenase CYP505E5</fullName>
    </recommendedName>
    <alternativeName>
        <fullName evidence="7">Bifunctional cytochrome P450/NADPH--P450 reductase CYP505E5</fullName>
    </alternativeName>
    <domain>
        <recommendedName>
            <fullName evidence="7">Cytochrome P450 monooxygenase</fullName>
            <ecNumber evidence="6">1.14.14.1</ecNumber>
        </recommendedName>
    </domain>
    <domain>
        <recommendedName>
            <fullName evidence="7">NADPH--cytochrome P450 reductase</fullName>
            <ecNumber evidence="6">1.6.2.4</ecNumber>
        </recommendedName>
    </domain>
</protein>
<evidence type="ECO:0000250" key="1">
    <source>
        <dbReference type="UniProtKB" id="P14779"/>
    </source>
</evidence>
<evidence type="ECO:0000250" key="2">
    <source>
        <dbReference type="UniProtKB" id="Q9Y8G7"/>
    </source>
</evidence>
<evidence type="ECO:0000255" key="3">
    <source>
        <dbReference type="PROSITE-ProRule" id="PRU00088"/>
    </source>
</evidence>
<evidence type="ECO:0000255" key="4">
    <source>
        <dbReference type="PROSITE-ProRule" id="PRU00716"/>
    </source>
</evidence>
<evidence type="ECO:0000256" key="5">
    <source>
        <dbReference type="SAM" id="MobiDB-lite"/>
    </source>
</evidence>
<evidence type="ECO:0000269" key="6">
    <source>
    </source>
</evidence>
<evidence type="ECO:0000303" key="7">
    <source>
    </source>
</evidence>
<evidence type="ECO:0000305" key="8"/>
<comment type="function">
    <text evidence="6">Self-sufficient cytochrome P450 monooxygenase that catalyzes the regioselective in-chain hydroxylation of alkanes, fatty alcohols, and fatty acids at the omega-7 position (PubMed:36607403). Performs hydroxylation of C10-C16 n-alkanes and C12 and C14 fatty alcohols; and thereby enables the one step biocatalytic synthesis of rare alcohols such as 5-dodecanol and 7-tetradecanol (PubMed:36607403). Converts 1-dodecanol into 1,5-dodecanediol as major product with very little sub-terminally hydroxylated products with the 1,4-dodecanediol and 1,6-dodecanediol more abundant (PubMed:36607403). Converts dodecanoic acid to 5-hydroxydodecanoic acid which can be further converted into delta-dodecalactone by lactonization of the 5-hydroxy acid at low pH (PubMed:36607403). Also gives sub-terminal hydroxylation of dodecanoic acid with 9-hydroxydodecanoic acid being the second most abundant product (PubMed:36607403).</text>
</comment>
<comment type="catalytic activity">
    <reaction evidence="6">
        <text>2 oxidized [cytochrome P450] + NADPH = 2 reduced [cytochrome P450] + NADP(+) + H(+)</text>
        <dbReference type="Rhea" id="RHEA:24040"/>
        <dbReference type="Rhea" id="RHEA-COMP:14627"/>
        <dbReference type="Rhea" id="RHEA-COMP:14628"/>
        <dbReference type="ChEBI" id="CHEBI:15378"/>
        <dbReference type="ChEBI" id="CHEBI:55376"/>
        <dbReference type="ChEBI" id="CHEBI:57783"/>
        <dbReference type="ChEBI" id="CHEBI:58349"/>
        <dbReference type="ChEBI" id="CHEBI:60344"/>
        <dbReference type="EC" id="1.6.2.4"/>
    </reaction>
</comment>
<comment type="catalytic activity">
    <reaction evidence="6">
        <text>an organic molecule + reduced [NADPH--hemoprotein reductase] + O2 = an alcohol + oxidized [NADPH--hemoprotein reductase] + H2O + H(+)</text>
        <dbReference type="Rhea" id="RHEA:17149"/>
        <dbReference type="Rhea" id="RHEA-COMP:11964"/>
        <dbReference type="Rhea" id="RHEA-COMP:11965"/>
        <dbReference type="ChEBI" id="CHEBI:15377"/>
        <dbReference type="ChEBI" id="CHEBI:15378"/>
        <dbReference type="ChEBI" id="CHEBI:15379"/>
        <dbReference type="ChEBI" id="CHEBI:30879"/>
        <dbReference type="ChEBI" id="CHEBI:57618"/>
        <dbReference type="ChEBI" id="CHEBI:58210"/>
        <dbReference type="ChEBI" id="CHEBI:142491"/>
        <dbReference type="EC" id="1.14.14.1"/>
    </reaction>
</comment>
<comment type="catalytic activity">
    <reaction evidence="6">
        <text>dodecanoate + reduced [NADPH--hemoprotein reductase] + O2 = 5-hydroxydodecanoate + oxidized [NADPH--hemoprotein reductase] + H2O + H(+)</text>
        <dbReference type="Rhea" id="RHEA:76723"/>
        <dbReference type="Rhea" id="RHEA-COMP:11964"/>
        <dbReference type="Rhea" id="RHEA-COMP:11965"/>
        <dbReference type="ChEBI" id="CHEBI:15377"/>
        <dbReference type="ChEBI" id="CHEBI:15378"/>
        <dbReference type="ChEBI" id="CHEBI:15379"/>
        <dbReference type="ChEBI" id="CHEBI:18262"/>
        <dbReference type="ChEBI" id="CHEBI:57618"/>
        <dbReference type="ChEBI" id="CHEBI:58210"/>
        <dbReference type="ChEBI" id="CHEBI:195418"/>
    </reaction>
    <physiologicalReaction direction="left-to-right" evidence="6">
        <dbReference type="Rhea" id="RHEA:76724"/>
    </physiologicalReaction>
</comment>
<comment type="catalytic activity">
    <reaction evidence="6">
        <text>tetradecanoate + reduced [NADPH--hemoprotein reductase] + O2 = 7-hydroxytetradecanoate + oxidized [NADPH--hemoprotein reductase] + H2O + H(+)</text>
        <dbReference type="Rhea" id="RHEA:76727"/>
        <dbReference type="Rhea" id="RHEA-COMP:11964"/>
        <dbReference type="Rhea" id="RHEA-COMP:11965"/>
        <dbReference type="ChEBI" id="CHEBI:15377"/>
        <dbReference type="ChEBI" id="CHEBI:15378"/>
        <dbReference type="ChEBI" id="CHEBI:15379"/>
        <dbReference type="ChEBI" id="CHEBI:30807"/>
        <dbReference type="ChEBI" id="CHEBI:57618"/>
        <dbReference type="ChEBI" id="CHEBI:58210"/>
        <dbReference type="ChEBI" id="CHEBI:195419"/>
    </reaction>
    <physiologicalReaction direction="left-to-right" evidence="6">
        <dbReference type="Rhea" id="RHEA:76728"/>
    </physiologicalReaction>
</comment>
<comment type="catalytic activity">
    <reaction evidence="6">
        <text>dodecan-1-ol + reduced [NADPH--hemoprotein reductase] + O2 = 1,5-dodecanediol + oxidized [NADPH--hemoprotein reductase] + H2O + H(+)</text>
        <dbReference type="Rhea" id="RHEA:76759"/>
        <dbReference type="Rhea" id="RHEA-COMP:11964"/>
        <dbReference type="Rhea" id="RHEA-COMP:11965"/>
        <dbReference type="ChEBI" id="CHEBI:15377"/>
        <dbReference type="ChEBI" id="CHEBI:15378"/>
        <dbReference type="ChEBI" id="CHEBI:15379"/>
        <dbReference type="ChEBI" id="CHEBI:28878"/>
        <dbReference type="ChEBI" id="CHEBI:57618"/>
        <dbReference type="ChEBI" id="CHEBI:58210"/>
        <dbReference type="ChEBI" id="CHEBI:195414"/>
    </reaction>
    <physiologicalReaction direction="left-to-right" evidence="6">
        <dbReference type="Rhea" id="RHEA:76760"/>
    </physiologicalReaction>
</comment>
<comment type="catalytic activity">
    <reaction evidence="6">
        <text>dodecan-1-ol + reduced [NADPH--hemoprotein reductase] + O2 = 1,4-dodecanediol + oxidized [NADPH--hemoprotein reductase] + H2O + H(+)</text>
        <dbReference type="Rhea" id="RHEA:76763"/>
        <dbReference type="Rhea" id="RHEA-COMP:11964"/>
        <dbReference type="Rhea" id="RHEA-COMP:11965"/>
        <dbReference type="ChEBI" id="CHEBI:15377"/>
        <dbReference type="ChEBI" id="CHEBI:15378"/>
        <dbReference type="ChEBI" id="CHEBI:15379"/>
        <dbReference type="ChEBI" id="CHEBI:28878"/>
        <dbReference type="ChEBI" id="CHEBI:57618"/>
        <dbReference type="ChEBI" id="CHEBI:58210"/>
        <dbReference type="ChEBI" id="CHEBI:195422"/>
    </reaction>
    <physiologicalReaction direction="left-to-right" evidence="6">
        <dbReference type="Rhea" id="RHEA:76764"/>
    </physiologicalReaction>
</comment>
<comment type="catalytic activity">
    <reaction evidence="6">
        <text>dodecan-1-ol + reduced [NADPH--hemoprotein reductase] + O2 = 1,6-dodecanediol + oxidized [NADPH--hemoprotein reductase] + H2O + H(+)</text>
        <dbReference type="Rhea" id="RHEA:76779"/>
        <dbReference type="Rhea" id="RHEA-COMP:11964"/>
        <dbReference type="Rhea" id="RHEA-COMP:11965"/>
        <dbReference type="ChEBI" id="CHEBI:15377"/>
        <dbReference type="ChEBI" id="CHEBI:15378"/>
        <dbReference type="ChEBI" id="CHEBI:15379"/>
        <dbReference type="ChEBI" id="CHEBI:28878"/>
        <dbReference type="ChEBI" id="CHEBI:57618"/>
        <dbReference type="ChEBI" id="CHEBI:58210"/>
        <dbReference type="ChEBI" id="CHEBI:195445"/>
    </reaction>
    <physiologicalReaction direction="left-to-right" evidence="6">
        <dbReference type="Rhea" id="RHEA:76780"/>
    </physiologicalReaction>
</comment>
<comment type="cofactor">
    <cofactor evidence="2">
        <name>FAD</name>
        <dbReference type="ChEBI" id="CHEBI:57692"/>
    </cofactor>
    <text evidence="2">Binds 1 FAD.</text>
</comment>
<comment type="cofactor">
    <cofactor evidence="2">
        <name>FMN</name>
        <dbReference type="ChEBI" id="CHEBI:58210"/>
    </cofactor>
    <text evidence="2">Binds 1 FMN.</text>
</comment>
<comment type="cofactor">
    <cofactor evidence="2">
        <name>heme</name>
        <dbReference type="ChEBI" id="CHEBI:30413"/>
    </cofactor>
</comment>
<comment type="similarity">
    <text evidence="8">In the N-terminal section; belongs to the cytochrome P450 family.</text>
</comment>
<reference key="1">
    <citation type="journal article" date="2011" name="Eukaryot. Cell">
        <title>Genome sequence of the white koji mold Aspergillus kawachii IFO 4308, used for brewing the Japanese distilled spirit shochu.</title>
        <authorList>
            <person name="Futagami T."/>
            <person name="Mori K."/>
            <person name="Yamashita A."/>
            <person name="Wada S."/>
            <person name="Kajiwara Y."/>
            <person name="Takashita H."/>
            <person name="Omori T."/>
            <person name="Takegawa K."/>
            <person name="Tashiro K."/>
            <person name="Kuhara S."/>
            <person name="Goto M."/>
        </authorList>
    </citation>
    <scope>NUCLEOTIDE SEQUENCE [LARGE SCALE GENOMIC DNA]</scope>
    <source>
        <strain>NBRC 4308</strain>
    </source>
</reference>
<reference key="2">
    <citation type="journal article" date="2023" name="Appl. Microbiol. Biotechnol.">
        <title>Delineation of the CYP505E subfamily of fungal self-sufficient in-chain hydroxylating cytochrome P450 monooxygenases.</title>
        <authorList>
            <person name="Smit M.S."/>
            <person name="Maseme M.J."/>
            <person name="van Marwijk J."/>
            <person name="Aschenbrenner J.C."/>
            <person name="Opperman D.J."/>
        </authorList>
    </citation>
    <scope>FUNCTION</scope>
    <scope>CATALYTIC ACTIVITY</scope>
</reference>
<dbReference type="EC" id="1.14.14.1" evidence="6"/>
<dbReference type="EC" id="1.6.2.4" evidence="6"/>
<dbReference type="EMBL" id="DF126462">
    <property type="protein sequence ID" value="GAA88365.1"/>
    <property type="molecule type" value="Genomic_DNA"/>
</dbReference>
<dbReference type="SMR" id="G7XMT1"/>
<dbReference type="STRING" id="1033177.G7XMT1"/>
<dbReference type="VEuPathDB" id="FungiDB:AKAW_06479"/>
<dbReference type="eggNOG" id="KOG0157">
    <property type="taxonomic scope" value="Eukaryota"/>
</dbReference>
<dbReference type="eggNOG" id="KOG1158">
    <property type="taxonomic scope" value="Eukaryota"/>
</dbReference>
<dbReference type="InParanoid" id="G7XMT1"/>
<dbReference type="OrthoDB" id="51954at5052"/>
<dbReference type="GO" id="GO:0005829">
    <property type="term" value="C:cytosol"/>
    <property type="evidence" value="ECO:0007669"/>
    <property type="project" value="TreeGrafter"/>
</dbReference>
<dbReference type="GO" id="GO:0070330">
    <property type="term" value="F:aromatase activity"/>
    <property type="evidence" value="ECO:0007669"/>
    <property type="project" value="InterPro"/>
</dbReference>
<dbReference type="GO" id="GO:0050660">
    <property type="term" value="F:flavin adenine dinucleotide binding"/>
    <property type="evidence" value="ECO:0007669"/>
    <property type="project" value="TreeGrafter"/>
</dbReference>
<dbReference type="GO" id="GO:0010181">
    <property type="term" value="F:FMN binding"/>
    <property type="evidence" value="ECO:0007669"/>
    <property type="project" value="InterPro"/>
</dbReference>
<dbReference type="GO" id="GO:0020037">
    <property type="term" value="F:heme binding"/>
    <property type="evidence" value="ECO:0007669"/>
    <property type="project" value="InterPro"/>
</dbReference>
<dbReference type="GO" id="GO:0005506">
    <property type="term" value="F:iron ion binding"/>
    <property type="evidence" value="ECO:0007669"/>
    <property type="project" value="InterPro"/>
</dbReference>
<dbReference type="GO" id="GO:0003958">
    <property type="term" value="F:NADPH-hemoprotein reductase activity"/>
    <property type="evidence" value="ECO:0007669"/>
    <property type="project" value="UniProtKB-EC"/>
</dbReference>
<dbReference type="CDD" id="cd06206">
    <property type="entry name" value="bifunctional_CYPOR"/>
    <property type="match status" value="1"/>
</dbReference>
<dbReference type="CDD" id="cd11068">
    <property type="entry name" value="CYP120A1"/>
    <property type="match status" value="1"/>
</dbReference>
<dbReference type="FunFam" id="1.10.630.10:FF:000040">
    <property type="entry name" value="Bifunctional cytochrome P450/NADPH--P450 reductase"/>
    <property type="match status" value="1"/>
</dbReference>
<dbReference type="Gene3D" id="3.40.50.360">
    <property type="match status" value="1"/>
</dbReference>
<dbReference type="Gene3D" id="1.10.630.10">
    <property type="entry name" value="Cytochrome P450"/>
    <property type="match status" value="1"/>
</dbReference>
<dbReference type="Gene3D" id="1.20.990.10">
    <property type="entry name" value="NADPH-cytochrome p450 Reductase, Chain A, domain 3"/>
    <property type="match status" value="1"/>
</dbReference>
<dbReference type="Gene3D" id="3.40.50.80">
    <property type="entry name" value="Nucleotide-binding domain of ferredoxin-NADP reductase (FNR) module"/>
    <property type="match status" value="1"/>
</dbReference>
<dbReference type="Gene3D" id="2.40.30.10">
    <property type="entry name" value="Translation factors"/>
    <property type="match status" value="1"/>
</dbReference>
<dbReference type="InterPro" id="IPR023206">
    <property type="entry name" value="Bifunctional_P450_P450_red"/>
</dbReference>
<dbReference type="InterPro" id="IPR003097">
    <property type="entry name" value="CysJ-like_FAD-binding"/>
</dbReference>
<dbReference type="InterPro" id="IPR001128">
    <property type="entry name" value="Cyt_P450"/>
</dbReference>
<dbReference type="InterPro" id="IPR017972">
    <property type="entry name" value="Cyt_P450_CS"/>
</dbReference>
<dbReference type="InterPro" id="IPR002401">
    <property type="entry name" value="Cyt_P450_E_grp-I"/>
</dbReference>
<dbReference type="InterPro" id="IPR036396">
    <property type="entry name" value="Cyt_P450_sf"/>
</dbReference>
<dbReference type="InterPro" id="IPR017927">
    <property type="entry name" value="FAD-bd_FR_type"/>
</dbReference>
<dbReference type="InterPro" id="IPR008254">
    <property type="entry name" value="Flavodoxin/NO_synth"/>
</dbReference>
<dbReference type="InterPro" id="IPR029039">
    <property type="entry name" value="Flavoprotein-like_sf"/>
</dbReference>
<dbReference type="InterPro" id="IPR039261">
    <property type="entry name" value="FNR_nucleotide-bd"/>
</dbReference>
<dbReference type="InterPro" id="IPR023173">
    <property type="entry name" value="NADPH_Cyt_P450_Rdtase_alpha"/>
</dbReference>
<dbReference type="InterPro" id="IPR001433">
    <property type="entry name" value="OxRdtase_FAD/NAD-bd"/>
</dbReference>
<dbReference type="InterPro" id="IPR017938">
    <property type="entry name" value="Riboflavin_synthase-like_b-brl"/>
</dbReference>
<dbReference type="PANTHER" id="PTHR19384:SF127">
    <property type="entry name" value="BIFUNCTIONAL CYTOCHROME P450_NADPH--P450 REDUCTASE"/>
    <property type="match status" value="1"/>
</dbReference>
<dbReference type="PANTHER" id="PTHR19384">
    <property type="entry name" value="NITRIC OXIDE SYNTHASE-RELATED"/>
    <property type="match status" value="1"/>
</dbReference>
<dbReference type="Pfam" id="PF00667">
    <property type="entry name" value="FAD_binding_1"/>
    <property type="match status" value="1"/>
</dbReference>
<dbReference type="Pfam" id="PF00258">
    <property type="entry name" value="Flavodoxin_1"/>
    <property type="match status" value="1"/>
</dbReference>
<dbReference type="Pfam" id="PF00175">
    <property type="entry name" value="NAD_binding_1"/>
    <property type="match status" value="1"/>
</dbReference>
<dbReference type="Pfam" id="PF00067">
    <property type="entry name" value="p450"/>
    <property type="match status" value="1"/>
</dbReference>
<dbReference type="PIRSF" id="PIRSF000209">
    <property type="entry name" value="Bifunctional_P450_P450R"/>
    <property type="match status" value="1"/>
</dbReference>
<dbReference type="PRINTS" id="PR00463">
    <property type="entry name" value="EP450I"/>
</dbReference>
<dbReference type="PRINTS" id="PR00385">
    <property type="entry name" value="P450"/>
</dbReference>
<dbReference type="SUPFAM" id="SSF48264">
    <property type="entry name" value="Cytochrome P450"/>
    <property type="match status" value="1"/>
</dbReference>
<dbReference type="SUPFAM" id="SSF52343">
    <property type="entry name" value="Ferredoxin reductase-like, C-terminal NADP-linked domain"/>
    <property type="match status" value="1"/>
</dbReference>
<dbReference type="SUPFAM" id="SSF52218">
    <property type="entry name" value="Flavoproteins"/>
    <property type="match status" value="1"/>
</dbReference>
<dbReference type="SUPFAM" id="SSF63380">
    <property type="entry name" value="Riboflavin synthase domain-like"/>
    <property type="match status" value="1"/>
</dbReference>
<dbReference type="PROSITE" id="PS00086">
    <property type="entry name" value="CYTOCHROME_P450"/>
    <property type="match status" value="1"/>
</dbReference>
<dbReference type="PROSITE" id="PS51384">
    <property type="entry name" value="FAD_FR"/>
    <property type="match status" value="1"/>
</dbReference>
<dbReference type="PROSITE" id="PS50902">
    <property type="entry name" value="FLAVODOXIN_LIKE"/>
    <property type="match status" value="1"/>
</dbReference>
<organism>
    <name type="scientific">Aspergillus kawachii (strain NBRC 4308)</name>
    <name type="common">White koji mold</name>
    <name type="synonym">Aspergillus awamori var. kawachi</name>
    <dbReference type="NCBI Taxonomy" id="1033177"/>
    <lineage>
        <taxon>Eukaryota</taxon>
        <taxon>Fungi</taxon>
        <taxon>Dikarya</taxon>
        <taxon>Ascomycota</taxon>
        <taxon>Pezizomycotina</taxon>
        <taxon>Eurotiomycetes</taxon>
        <taxon>Eurotiomycetidae</taxon>
        <taxon>Eurotiales</taxon>
        <taxon>Aspergillaceae</taxon>
        <taxon>Aspergillus</taxon>
        <taxon>Aspergillus subgen. Circumdati</taxon>
    </lineage>
</organism>
<gene>
    <name evidence="7" type="primary">CYP505E5</name>
    <name type="ORF">AKAW_06479</name>
</gene>
<keyword id="KW-0249">Electron transport</keyword>
<keyword id="KW-0274">FAD</keyword>
<keyword id="KW-0285">Flavoprotein</keyword>
<keyword id="KW-0288">FMN</keyword>
<keyword id="KW-0349">Heme</keyword>
<keyword id="KW-0408">Iron</keyword>
<keyword id="KW-0479">Metal-binding</keyword>
<keyword id="KW-0503">Monooxygenase</keyword>
<keyword id="KW-0521">NADP</keyword>
<keyword id="KW-0560">Oxidoreductase</keyword>
<keyword id="KW-0813">Transport</keyword>